<organism>
    <name type="scientific">Ovis canadensis</name>
    <name type="common">Bighorn sheep</name>
    <dbReference type="NCBI Taxonomy" id="37174"/>
    <lineage>
        <taxon>Eukaryota</taxon>
        <taxon>Metazoa</taxon>
        <taxon>Chordata</taxon>
        <taxon>Craniata</taxon>
        <taxon>Vertebrata</taxon>
        <taxon>Euteleostomi</taxon>
        <taxon>Mammalia</taxon>
        <taxon>Eutheria</taxon>
        <taxon>Laurasiatheria</taxon>
        <taxon>Artiodactyla</taxon>
        <taxon>Ruminantia</taxon>
        <taxon>Pecora</taxon>
        <taxon>Bovidae</taxon>
        <taxon>Caprinae</taxon>
        <taxon>Ovis</taxon>
    </lineage>
</organism>
<keyword id="KW-0249">Electron transport</keyword>
<keyword id="KW-0472">Membrane</keyword>
<keyword id="KW-0496">Mitochondrion</keyword>
<keyword id="KW-0999">Mitochondrion inner membrane</keyword>
<keyword id="KW-0520">NAD</keyword>
<keyword id="KW-0679">Respiratory chain</keyword>
<keyword id="KW-1278">Translocase</keyword>
<keyword id="KW-0812">Transmembrane</keyword>
<keyword id="KW-1133">Transmembrane helix</keyword>
<keyword id="KW-0813">Transport</keyword>
<keyword id="KW-0830">Ubiquinone</keyword>
<geneLocation type="mitochondrion"/>
<reference key="1">
    <citation type="submission" date="2001-03" db="EMBL/GenBank/DDBJ databases">
        <title>Molecular analysis of wild and domestic sheep populations questions current nomenclature and provides evidence for domestication from two different subspecies.</title>
        <authorList>
            <person name="Hienadhleder S."/>
            <person name="Kaupe B."/>
            <person name="Wassmuth R."/>
            <person name="Janke A."/>
        </authorList>
    </citation>
    <scope>NUCLEOTIDE SEQUENCE [GENOMIC DNA]</scope>
    <source>
        <tissue>Liver</tissue>
    </source>
</reference>
<sequence length="98" mass="10837">MSLVYMNIMMAFTVSLTGLLMYRSHLMSSLLCLEGMMLSLFILATLMILNSHFTLASMMPIILLVFAACEAALGLSLLVMVSNTYGTDYVQNLNLLQC</sequence>
<comment type="function">
    <text evidence="1">Core subunit of the mitochondrial membrane respiratory chain NADH dehydrogenase (Complex I) which catalyzes electron transfer from NADH through the respiratory chain, using ubiquinone as an electron acceptor. Part of the enzyme membrane arm which is embedded in the lipid bilayer and involved in proton translocation.</text>
</comment>
<comment type="catalytic activity">
    <reaction evidence="1">
        <text>a ubiquinone + NADH + 5 H(+)(in) = a ubiquinol + NAD(+) + 4 H(+)(out)</text>
        <dbReference type="Rhea" id="RHEA:29091"/>
        <dbReference type="Rhea" id="RHEA-COMP:9565"/>
        <dbReference type="Rhea" id="RHEA-COMP:9566"/>
        <dbReference type="ChEBI" id="CHEBI:15378"/>
        <dbReference type="ChEBI" id="CHEBI:16389"/>
        <dbReference type="ChEBI" id="CHEBI:17976"/>
        <dbReference type="ChEBI" id="CHEBI:57540"/>
        <dbReference type="ChEBI" id="CHEBI:57945"/>
        <dbReference type="EC" id="7.1.1.2"/>
    </reaction>
    <physiologicalReaction direction="left-to-right" evidence="1">
        <dbReference type="Rhea" id="RHEA:29092"/>
    </physiologicalReaction>
</comment>
<comment type="subunit">
    <text evidence="2">Core subunit of respiratory chain NADH dehydrogenase (Complex I) which is composed of 45 different subunits.</text>
</comment>
<comment type="subcellular location">
    <subcellularLocation>
        <location evidence="2">Mitochondrion inner membrane</location>
        <topology evidence="3">Multi-pass membrane protein</topology>
    </subcellularLocation>
</comment>
<comment type="similarity">
    <text evidence="4">Belongs to the complex I subunit 4L family.</text>
</comment>
<name>NU4LM_OVICA</name>
<dbReference type="EC" id="7.1.1.2"/>
<dbReference type="EMBL" id="AJ409303">
    <property type="protein sequence ID" value="CAC84163.1"/>
    <property type="molecule type" value="Genomic_DNA"/>
</dbReference>
<dbReference type="SMR" id="Q7HLD2"/>
<dbReference type="GO" id="GO:0005743">
    <property type="term" value="C:mitochondrial inner membrane"/>
    <property type="evidence" value="ECO:0000250"/>
    <property type="project" value="UniProtKB"/>
</dbReference>
<dbReference type="GO" id="GO:0045271">
    <property type="term" value="C:respiratory chain complex I"/>
    <property type="evidence" value="ECO:0000250"/>
    <property type="project" value="UniProtKB"/>
</dbReference>
<dbReference type="GO" id="GO:0008137">
    <property type="term" value="F:NADH dehydrogenase (ubiquinone) activity"/>
    <property type="evidence" value="ECO:0000250"/>
    <property type="project" value="UniProtKB"/>
</dbReference>
<dbReference type="GO" id="GO:0042773">
    <property type="term" value="P:ATP synthesis coupled electron transport"/>
    <property type="evidence" value="ECO:0007669"/>
    <property type="project" value="InterPro"/>
</dbReference>
<dbReference type="FunFam" id="1.10.287.3510:FF:000002">
    <property type="entry name" value="NADH-ubiquinone oxidoreductase chain 4L"/>
    <property type="match status" value="1"/>
</dbReference>
<dbReference type="Gene3D" id="1.10.287.3510">
    <property type="match status" value="1"/>
</dbReference>
<dbReference type="InterPro" id="IPR001133">
    <property type="entry name" value="NADH_UbQ_OxRdtase_chain4L/K"/>
</dbReference>
<dbReference type="InterPro" id="IPR039428">
    <property type="entry name" value="NUOK/Mnh_C1-like"/>
</dbReference>
<dbReference type="PANTHER" id="PTHR11434:SF0">
    <property type="entry name" value="NADH-UBIQUINONE OXIDOREDUCTASE CHAIN 4L"/>
    <property type="match status" value="1"/>
</dbReference>
<dbReference type="PANTHER" id="PTHR11434">
    <property type="entry name" value="NADH-UBIQUINONE OXIDOREDUCTASE SUBUNIT ND4L"/>
    <property type="match status" value="1"/>
</dbReference>
<dbReference type="Pfam" id="PF00420">
    <property type="entry name" value="Oxidored_q2"/>
    <property type="match status" value="1"/>
</dbReference>
<evidence type="ECO:0000250" key="1">
    <source>
        <dbReference type="UniProtKB" id="P03901"/>
    </source>
</evidence>
<evidence type="ECO:0000250" key="2">
    <source>
        <dbReference type="UniProtKB" id="P03902"/>
    </source>
</evidence>
<evidence type="ECO:0000255" key="3"/>
<evidence type="ECO:0000305" key="4"/>
<accession>Q7HLD2</accession>
<feature type="chain" id="PRO_0000275084" description="NADH-ubiquinone oxidoreductase chain 4L">
    <location>
        <begin position="1"/>
        <end position="98"/>
    </location>
</feature>
<feature type="transmembrane region" description="Helical" evidence="3">
    <location>
        <begin position="1"/>
        <end position="21"/>
    </location>
</feature>
<feature type="transmembrane region" description="Helical" evidence="3">
    <location>
        <begin position="29"/>
        <end position="49"/>
    </location>
</feature>
<feature type="transmembrane region" description="Helical" evidence="3">
    <location>
        <begin position="61"/>
        <end position="81"/>
    </location>
</feature>
<gene>
    <name type="primary">MT-ND4L</name>
    <name type="synonym">MTND4L</name>
    <name type="synonym">NADH4L</name>
    <name type="synonym">ND4L</name>
</gene>
<proteinExistence type="inferred from homology"/>
<protein>
    <recommendedName>
        <fullName>NADH-ubiquinone oxidoreductase chain 4L</fullName>
        <ecNumber>7.1.1.2</ecNumber>
    </recommendedName>
    <alternativeName>
        <fullName>NADH dehydrogenase subunit 4L</fullName>
    </alternativeName>
</protein>